<comment type="function">
    <text evidence="1">May serve as a molecular marker for or play a role in the malignant progression of glioblastomas.</text>
</comment>
<comment type="tissue specificity">
    <text evidence="1">Expressed predominantly in brain and weakly in heart and lung. Expression is reduced or undetectable in cultured glioma cells, primary glioblastoma cells and malignant glioblastoma tumors.</text>
</comment>
<comment type="caution">
    <text evidence="2">Product of a dubious CDS prediction.</text>
</comment>
<gene>
    <name type="primary">RIG</name>
</gene>
<name>RIG_HUMAN</name>
<keyword id="KW-1185">Reference proteome</keyword>
<proteinExistence type="uncertain"/>
<feature type="chain" id="PRO_0000347326" description="Putative protein RIG">
    <location>
        <begin position="1"/>
        <end position="110"/>
    </location>
</feature>
<reference key="1">
    <citation type="journal article" date="1997" name="Oncogene">
        <title>Identification of a novel gene product, RIG, that is down-regulated in human glioblastoma.</title>
        <authorList>
            <person name="Ligon A.H."/>
            <person name="Pershouse M.A."/>
            <person name="Jasser S.A."/>
            <person name="Yung W.K.A."/>
            <person name="Steck P.A."/>
        </authorList>
    </citation>
    <scope>NUCLEOTIDE SEQUENCE [MRNA]</scope>
    <scope>FUNCTION</scope>
    <scope>TISSUE SPECIFICITY</scope>
    <source>
        <tissue>Brain</tissue>
    </source>
</reference>
<sequence>MPFFSSCLCPSHYSGPSLPSSTSSSLPTGPENQLGFVLLQAMVHHANSSCVRNAFWLQITEKLTPALSIIISVVYLRCPEMVENRIGFLLNVKDSKTLSVVGPHPKPCIL</sequence>
<dbReference type="EMBL" id="U32331">
    <property type="protein sequence ID" value="AAC35996.1"/>
    <property type="molecule type" value="mRNA"/>
</dbReference>
<dbReference type="PIR" id="G01973">
    <property type="entry name" value="G01973"/>
</dbReference>
<dbReference type="iPTMnet" id="Q13278"/>
<dbReference type="PhosphoSitePlus" id="Q13278"/>
<dbReference type="BioMuta" id="RIG"/>
<dbReference type="neXtProt" id="NX_Q13278"/>
<dbReference type="InParanoid" id="Q13278"/>
<dbReference type="PAN-GO" id="Q13278">
    <property type="GO annotations" value="0 GO annotations based on evolutionary models"/>
</dbReference>
<dbReference type="PathwayCommons" id="Q13278"/>
<dbReference type="Pharos" id="Q13278">
    <property type="development level" value="Tdark"/>
</dbReference>
<dbReference type="Proteomes" id="UP000005640">
    <property type="component" value="Unplaced"/>
</dbReference>
<dbReference type="RNAct" id="Q13278">
    <property type="molecule type" value="protein"/>
</dbReference>
<evidence type="ECO:0000269" key="1">
    <source>
    </source>
</evidence>
<evidence type="ECO:0000305" key="2"/>
<organism>
    <name type="scientific">Homo sapiens</name>
    <name type="common">Human</name>
    <dbReference type="NCBI Taxonomy" id="9606"/>
    <lineage>
        <taxon>Eukaryota</taxon>
        <taxon>Metazoa</taxon>
        <taxon>Chordata</taxon>
        <taxon>Craniata</taxon>
        <taxon>Vertebrata</taxon>
        <taxon>Euteleostomi</taxon>
        <taxon>Mammalia</taxon>
        <taxon>Eutheria</taxon>
        <taxon>Euarchontoglires</taxon>
        <taxon>Primates</taxon>
        <taxon>Haplorrhini</taxon>
        <taxon>Catarrhini</taxon>
        <taxon>Hominidae</taxon>
        <taxon>Homo</taxon>
    </lineage>
</organism>
<accession>Q13278</accession>
<protein>
    <recommendedName>
        <fullName>Putative protein RIG</fullName>
    </recommendedName>
    <alternativeName>
        <fullName>Protein regulated in glioma</fullName>
    </alternativeName>
</protein>